<proteinExistence type="inferred from homology"/>
<accession>Q4FQZ1</accession>
<organism>
    <name type="scientific">Psychrobacter arcticus (strain DSM 17307 / VKM B-2377 / 273-4)</name>
    <dbReference type="NCBI Taxonomy" id="259536"/>
    <lineage>
        <taxon>Bacteria</taxon>
        <taxon>Pseudomonadati</taxon>
        <taxon>Pseudomonadota</taxon>
        <taxon>Gammaproteobacteria</taxon>
        <taxon>Moraxellales</taxon>
        <taxon>Moraxellaceae</taxon>
        <taxon>Psychrobacter</taxon>
    </lineage>
</organism>
<comment type="function">
    <text evidence="1">Molecular chaperone. Has ATPase activity.</text>
</comment>
<comment type="subunit">
    <text evidence="1">Homodimer.</text>
</comment>
<comment type="subcellular location">
    <subcellularLocation>
        <location evidence="1">Cytoplasm</location>
    </subcellularLocation>
</comment>
<comment type="similarity">
    <text evidence="1">Belongs to the heat shock protein 90 family.</text>
</comment>
<gene>
    <name evidence="1" type="primary">htpG</name>
    <name type="ordered locus">Psyc_1719</name>
</gene>
<sequence length="656" mass="73615">MSEQNPTDSKNPELKKHTFEAEVAQLLHLVTHSLYSNSDIFVRELVSNASDACDKLRFEATNDDSLYEDDGELRIRIAVDEDAKTITFTDNGIGMNEADAIENLGTIAKSGTKAFLDKLSDSQKQDGQLIGQFGVGFYSGFIVADTISVETRKAGDAAENGVRWVSDGTGSFTVENISKTERGSSITLHLKEQYSEGEDGYLDRSKIKRLVNKYSDHISLPIQMRKEIWQEDEVEEGDDTPANGQMVLTDEWETINKASALWTRTASDVEDDEYVDFYKNITYDMDAPLTWTHNRVEGRVQYTQLLYIPKKAPVDLYTREQQHGLKLYVKRVFIMDDAEQLLPMYLRFVKGVIDSADLPLNVSREILQESRDVKSIRDGNARRILTLLASLANSEDADKQEKFAQFYAEFGDVIKEGVGEDMGNQERIAKLLRYATSTQDGEMTSFEDYKARMKDGQKAIYYLTADNLAAAKNSPQLELFKKKGIEVILMTSRVDEWAMNFLTSFDETPLQNIAKGAVDLGDLQDEAEKAEAEKAQETMKPVVDKLKAALGDRAKDVKVSTRLVDSPACLVVGEGELSPQMIQMLKQMGQDVPESKPTLEVNPDHPLIKKLESSEQSAEDFDKLAQVIFDQALLADGGQLEDPAAYLRRVNELLMK</sequence>
<keyword id="KW-0067">ATP-binding</keyword>
<keyword id="KW-0143">Chaperone</keyword>
<keyword id="KW-0963">Cytoplasm</keyword>
<keyword id="KW-0547">Nucleotide-binding</keyword>
<keyword id="KW-1185">Reference proteome</keyword>
<keyword id="KW-0346">Stress response</keyword>
<name>HTPG_PSYA2</name>
<dbReference type="EMBL" id="CP000082">
    <property type="protein sequence ID" value="AAZ19567.1"/>
    <property type="molecule type" value="Genomic_DNA"/>
</dbReference>
<dbReference type="RefSeq" id="WP_011280980.1">
    <property type="nucleotide sequence ID" value="NC_007204.1"/>
</dbReference>
<dbReference type="SMR" id="Q4FQZ1"/>
<dbReference type="STRING" id="259536.Psyc_1719"/>
<dbReference type="KEGG" id="par:Psyc_1719"/>
<dbReference type="eggNOG" id="COG0326">
    <property type="taxonomic scope" value="Bacteria"/>
</dbReference>
<dbReference type="HOGENOM" id="CLU_006684_3_0_6"/>
<dbReference type="OrthoDB" id="9802640at2"/>
<dbReference type="Proteomes" id="UP000000546">
    <property type="component" value="Chromosome"/>
</dbReference>
<dbReference type="GO" id="GO:0005737">
    <property type="term" value="C:cytoplasm"/>
    <property type="evidence" value="ECO:0007669"/>
    <property type="project" value="UniProtKB-SubCell"/>
</dbReference>
<dbReference type="GO" id="GO:0005524">
    <property type="term" value="F:ATP binding"/>
    <property type="evidence" value="ECO:0007669"/>
    <property type="project" value="UniProtKB-UniRule"/>
</dbReference>
<dbReference type="GO" id="GO:0016887">
    <property type="term" value="F:ATP hydrolysis activity"/>
    <property type="evidence" value="ECO:0007669"/>
    <property type="project" value="InterPro"/>
</dbReference>
<dbReference type="GO" id="GO:0140662">
    <property type="term" value="F:ATP-dependent protein folding chaperone"/>
    <property type="evidence" value="ECO:0007669"/>
    <property type="project" value="InterPro"/>
</dbReference>
<dbReference type="GO" id="GO:0051082">
    <property type="term" value="F:unfolded protein binding"/>
    <property type="evidence" value="ECO:0007669"/>
    <property type="project" value="UniProtKB-UniRule"/>
</dbReference>
<dbReference type="CDD" id="cd16927">
    <property type="entry name" value="HATPase_Hsp90-like"/>
    <property type="match status" value="1"/>
</dbReference>
<dbReference type="FunFam" id="3.30.230.80:FF:000002">
    <property type="entry name" value="Molecular chaperone HtpG"/>
    <property type="match status" value="1"/>
</dbReference>
<dbReference type="FunFam" id="3.30.565.10:FF:000009">
    <property type="entry name" value="Molecular chaperone HtpG"/>
    <property type="match status" value="1"/>
</dbReference>
<dbReference type="Gene3D" id="3.30.230.80">
    <property type="match status" value="1"/>
</dbReference>
<dbReference type="Gene3D" id="3.40.50.11260">
    <property type="match status" value="1"/>
</dbReference>
<dbReference type="Gene3D" id="1.20.120.790">
    <property type="entry name" value="Heat shock protein 90, C-terminal domain"/>
    <property type="match status" value="1"/>
</dbReference>
<dbReference type="Gene3D" id="3.30.565.10">
    <property type="entry name" value="Histidine kinase-like ATPase, C-terminal domain"/>
    <property type="match status" value="1"/>
</dbReference>
<dbReference type="HAMAP" id="MF_00505">
    <property type="entry name" value="HSP90"/>
    <property type="match status" value="1"/>
</dbReference>
<dbReference type="InterPro" id="IPR036890">
    <property type="entry name" value="HATPase_C_sf"/>
</dbReference>
<dbReference type="InterPro" id="IPR037196">
    <property type="entry name" value="HSP90_C"/>
</dbReference>
<dbReference type="InterPro" id="IPR001404">
    <property type="entry name" value="Hsp90_fam"/>
</dbReference>
<dbReference type="InterPro" id="IPR020575">
    <property type="entry name" value="Hsp90_N"/>
</dbReference>
<dbReference type="InterPro" id="IPR020568">
    <property type="entry name" value="Ribosomal_Su5_D2-typ_SF"/>
</dbReference>
<dbReference type="NCBIfam" id="NF003555">
    <property type="entry name" value="PRK05218.1"/>
    <property type="match status" value="1"/>
</dbReference>
<dbReference type="PANTHER" id="PTHR11528">
    <property type="entry name" value="HEAT SHOCK PROTEIN 90 FAMILY MEMBER"/>
    <property type="match status" value="1"/>
</dbReference>
<dbReference type="Pfam" id="PF13589">
    <property type="entry name" value="HATPase_c_3"/>
    <property type="match status" value="1"/>
</dbReference>
<dbReference type="Pfam" id="PF00183">
    <property type="entry name" value="HSP90"/>
    <property type="match status" value="1"/>
</dbReference>
<dbReference type="PIRSF" id="PIRSF002583">
    <property type="entry name" value="Hsp90"/>
    <property type="match status" value="1"/>
</dbReference>
<dbReference type="PRINTS" id="PR00775">
    <property type="entry name" value="HEATSHOCK90"/>
</dbReference>
<dbReference type="SUPFAM" id="SSF55874">
    <property type="entry name" value="ATPase domain of HSP90 chaperone/DNA topoisomerase II/histidine kinase"/>
    <property type="match status" value="1"/>
</dbReference>
<dbReference type="SUPFAM" id="SSF110942">
    <property type="entry name" value="HSP90 C-terminal domain"/>
    <property type="match status" value="1"/>
</dbReference>
<dbReference type="SUPFAM" id="SSF54211">
    <property type="entry name" value="Ribosomal protein S5 domain 2-like"/>
    <property type="match status" value="1"/>
</dbReference>
<feature type="chain" id="PRO_0000224225" description="Chaperone protein HtpG">
    <location>
        <begin position="1"/>
        <end position="656"/>
    </location>
</feature>
<feature type="region of interest" description="A; substrate-binding" evidence="1">
    <location>
        <begin position="1"/>
        <end position="364"/>
    </location>
</feature>
<feature type="region of interest" description="B" evidence="1">
    <location>
        <begin position="365"/>
        <end position="583"/>
    </location>
</feature>
<feature type="region of interest" description="C" evidence="1">
    <location>
        <begin position="584"/>
        <end position="656"/>
    </location>
</feature>
<evidence type="ECO:0000255" key="1">
    <source>
        <dbReference type="HAMAP-Rule" id="MF_00505"/>
    </source>
</evidence>
<protein>
    <recommendedName>
        <fullName evidence="1">Chaperone protein HtpG</fullName>
    </recommendedName>
    <alternativeName>
        <fullName evidence="1">Heat shock protein HtpG</fullName>
    </alternativeName>
    <alternativeName>
        <fullName evidence="1">High temperature protein G</fullName>
    </alternativeName>
</protein>
<reference key="1">
    <citation type="journal article" date="2010" name="Appl. Environ. Microbiol.">
        <title>The genome sequence of Psychrobacter arcticus 273-4, a psychroactive Siberian permafrost bacterium, reveals mechanisms for adaptation to low-temperature growth.</title>
        <authorList>
            <person name="Ayala-del-Rio H.L."/>
            <person name="Chain P.S."/>
            <person name="Grzymski J.J."/>
            <person name="Ponder M.A."/>
            <person name="Ivanova N."/>
            <person name="Bergholz P.W."/>
            <person name="Di Bartolo G."/>
            <person name="Hauser L."/>
            <person name="Land M."/>
            <person name="Bakermans C."/>
            <person name="Rodrigues D."/>
            <person name="Klappenbach J."/>
            <person name="Zarka D."/>
            <person name="Larimer F."/>
            <person name="Richardson P."/>
            <person name="Murray A."/>
            <person name="Thomashow M."/>
            <person name="Tiedje J.M."/>
        </authorList>
    </citation>
    <scope>NUCLEOTIDE SEQUENCE [LARGE SCALE GENOMIC DNA]</scope>
    <source>
        <strain>DSM 17307 / VKM B-2377 / 273-4</strain>
    </source>
</reference>